<gene>
    <name type="primary">C14orf119</name>
    <name type="ORF">My028</name>
</gene>
<proteinExistence type="evidence at protein level"/>
<comment type="interaction">
    <interactant intactId="EBI-725606">
        <id>Q9NWQ9</id>
    </interactant>
    <interactant intactId="EBI-351710">
        <id>P12814</id>
        <label>ACTN1</label>
    </interactant>
    <organismsDiffer>false</organismsDiffer>
    <experiments>4</experiments>
</comment>
<comment type="interaction">
    <interactant intactId="EBI-725606">
        <id>Q9NWQ9</id>
    </interactant>
    <interactant intactId="EBI-351526">
        <id>O43707</id>
        <label>ACTN4</label>
    </interactant>
    <organismsDiffer>false</organismsDiffer>
    <experiments>3</experiments>
</comment>
<comment type="interaction">
    <interactant intactId="EBI-725606">
        <id>Q9NWQ9</id>
    </interactant>
    <interactant intactId="EBI-12805486">
        <id>A6NKF2</id>
        <label>ARID3C</label>
    </interactant>
    <organismsDiffer>false</organismsDiffer>
    <experiments>3</experiments>
</comment>
<comment type="interaction">
    <interactant intactId="EBI-725606">
        <id>Q9NWQ9</id>
    </interactant>
    <interactant intactId="EBI-948603">
        <id>Q03989</id>
        <label>ARID5A</label>
    </interactant>
    <organismsDiffer>false</organismsDiffer>
    <experiments>3</experiments>
</comment>
<comment type="interaction">
    <interactant intactId="EBI-725606">
        <id>Q9NWQ9</id>
    </interactant>
    <interactant intactId="EBI-10693257">
        <id>Q9H7T9</id>
        <label>AUNIP</label>
    </interactant>
    <organismsDiffer>false</organismsDiffer>
    <experiments>3</experiments>
</comment>
<comment type="interaction">
    <interactant intactId="EBI-725606">
        <id>Q9NWQ9</id>
    </interactant>
    <interactant intactId="EBI-10181188">
        <id>Q8N7W2-2</id>
        <label>BEND7</label>
    </interactant>
    <organismsDiffer>false</organismsDiffer>
    <experiments>3</experiments>
</comment>
<comment type="interaction">
    <interactant intactId="EBI-725606">
        <id>Q9NWQ9</id>
    </interactant>
    <interactant intactId="EBI-2653038">
        <id>Q9NQY0</id>
        <label>BIN3</label>
    </interactant>
    <organismsDiffer>false</organismsDiffer>
    <experiments>3</experiments>
</comment>
<comment type="interaction">
    <interactant intactId="EBI-725606">
        <id>Q9NWQ9</id>
    </interactant>
    <interactant intactId="EBI-11536642">
        <id>Q9BXJ1-2</id>
        <label>C1QTNF1</label>
    </interactant>
    <organismsDiffer>false</organismsDiffer>
    <experiments>3</experiments>
</comment>
<comment type="interaction">
    <interactant intactId="EBI-725606">
        <id>Q9NWQ9</id>
    </interactant>
    <interactant intactId="EBI-375013">
        <id>P30281</id>
        <label>CCND3</label>
    </interactant>
    <organismsDiffer>false</organismsDiffer>
    <experiments>3</experiments>
</comment>
<comment type="interaction">
    <interactant intactId="EBI-725606">
        <id>Q9NWQ9</id>
    </interactant>
    <interactant intactId="EBI-7851002">
        <id>Q9UNH5</id>
        <label>CDC14A</label>
    </interactant>
    <organismsDiffer>false</organismsDiffer>
    <experiments>3</experiments>
</comment>
<comment type="interaction">
    <interactant intactId="EBI-725606">
        <id>Q9NWQ9</id>
    </interactant>
    <interactant intactId="EBI-1057156">
        <id>Q9HD42</id>
        <label>CHMP1A</label>
    </interactant>
    <organismsDiffer>false</organismsDiffer>
    <experiments>3</experiments>
</comment>
<comment type="interaction">
    <interactant intactId="EBI-725606">
        <id>Q9NWQ9</id>
    </interactant>
    <interactant intactId="EBI-1056029">
        <id>Q16740</id>
        <label>CLPP</label>
    </interactant>
    <organismsDiffer>false</organismsDiffer>
    <experiments>3</experiments>
</comment>
<comment type="interaction">
    <interactant intactId="EBI-725606">
        <id>Q9NWQ9</id>
    </interactant>
    <interactant intactId="EBI-1188472">
        <id>P78358</id>
        <label>CTAG1B</label>
    </interactant>
    <organismsDiffer>false</organismsDiffer>
    <experiments>3</experiments>
</comment>
<comment type="interaction">
    <interactant intactId="EBI-725606">
        <id>Q9NWQ9</id>
    </interactant>
    <interactant intactId="EBI-742054">
        <id>Q96D03</id>
        <label>DDIT4L</label>
    </interactant>
    <organismsDiffer>false</organismsDiffer>
    <experiments>3</experiments>
</comment>
<comment type="interaction">
    <interactant intactId="EBI-725606">
        <id>Q9NWQ9</id>
    </interactant>
    <interactant intactId="EBI-3937367">
        <id>Q9NUI1</id>
        <label>DECR2</label>
    </interactant>
    <organismsDiffer>false</organismsDiffer>
    <experiments>3</experiments>
</comment>
<comment type="interaction">
    <interactant intactId="EBI-725606">
        <id>Q9NWQ9</id>
    </interactant>
    <interactant intactId="EBI-349105">
        <id>P63167</id>
        <label>DYNLL1</label>
    </interactant>
    <organismsDiffer>false</organismsDiffer>
    <experiments>3</experiments>
</comment>
<comment type="interaction">
    <interactant intactId="EBI-725606">
        <id>Q9NWQ9</id>
    </interactant>
    <interactant intactId="EBI-742371">
        <id>Q96FJ2</id>
        <label>DYNLL2</label>
    </interactant>
    <organismsDiffer>false</organismsDiffer>
    <experiments>3</experiments>
</comment>
<comment type="interaction">
    <interactant intactId="EBI-725606">
        <id>Q9NWQ9</id>
    </interactant>
    <interactant intactId="EBI-7469266">
        <id>Q96HZ4</id>
        <label>HES6</label>
    </interactant>
    <organismsDiffer>false</organismsDiffer>
    <experiments>3</experiments>
</comment>
<comment type="interaction">
    <interactant intactId="EBI-725606">
        <id>Q9NWQ9</id>
    </interactant>
    <interactant intactId="EBI-6678255">
        <id>Q14774</id>
        <label>HLX</label>
    </interactant>
    <organismsDiffer>false</organismsDiffer>
    <experiments>3</experiments>
</comment>
<comment type="interaction">
    <interactant intactId="EBI-725606">
        <id>Q9NWQ9</id>
    </interactant>
    <interactant intactId="EBI-713401">
        <id>Q9P0W2</id>
        <label>HMG20B</label>
    </interactant>
    <organismsDiffer>false</organismsDiffer>
    <experiments>3</experiments>
</comment>
<comment type="interaction">
    <interactant intactId="EBI-725606">
        <id>Q9NWQ9</id>
    </interactant>
    <interactant intactId="EBI-712105">
        <id>Q13352</id>
        <label>ITGB3BP</label>
    </interactant>
    <organismsDiffer>false</organismsDiffer>
    <experiments>3</experiments>
</comment>
<comment type="interaction">
    <interactant intactId="EBI-725606">
        <id>Q9NWQ9</id>
    </interactant>
    <interactant intactId="EBI-9089060">
        <id>Q7Z7F0-4</id>
        <label>KHDC4</label>
    </interactant>
    <organismsDiffer>false</organismsDiffer>
    <experiments>3</experiments>
</comment>
<comment type="interaction">
    <interactant intactId="EBI-725606">
        <id>Q9NWQ9</id>
    </interactant>
    <interactant intactId="EBI-2371606">
        <id>P19013</id>
        <label>KRT4</label>
    </interactant>
    <organismsDiffer>false</organismsDiffer>
    <experiments>3</experiments>
</comment>
<comment type="interaction">
    <interactant intactId="EBI-725606">
        <id>Q9NWQ9</id>
    </interactant>
    <interactant intactId="EBI-1056564">
        <id>Q8N1N4</id>
        <label>KRT78</label>
    </interactant>
    <organismsDiffer>false</organismsDiffer>
    <experiments>3</experiments>
</comment>
<comment type="interaction">
    <interactant intactId="EBI-725606">
        <id>Q9NWQ9</id>
    </interactant>
    <interactant intactId="EBI-10241252">
        <id>Q3SY46</id>
        <label>KRTAP13-3</label>
    </interactant>
    <organismsDiffer>false</organismsDiffer>
    <experiments>3</experiments>
</comment>
<comment type="interaction">
    <interactant intactId="EBI-725606">
        <id>Q9NWQ9</id>
    </interactant>
    <interactant intactId="EBI-9088686">
        <id>Q14847-2</id>
        <label>LASP1</label>
    </interactant>
    <organismsDiffer>false</organismsDiffer>
    <experiments>3</experiments>
</comment>
<comment type="interaction">
    <interactant intactId="EBI-725606">
        <id>Q9NWQ9</id>
    </interactant>
    <interactant intactId="EBI-2865580">
        <id>O43679</id>
        <label>LDB2</label>
    </interactant>
    <organismsDiffer>false</organismsDiffer>
    <experiments>3</experiments>
</comment>
<comment type="interaction">
    <interactant intactId="EBI-725606">
        <id>Q9NWQ9</id>
    </interactant>
    <interactant intactId="EBI-726510">
        <id>Q96BZ8</id>
        <label>LENG1</label>
    </interactant>
    <organismsDiffer>false</organismsDiffer>
    <experiments>3</experiments>
</comment>
<comment type="interaction">
    <interactant intactId="EBI-725606">
        <id>Q9NWQ9</id>
    </interactant>
    <interactant intactId="EBI-2864512">
        <id>P50221</id>
        <label>MEOX1</label>
    </interactant>
    <organismsDiffer>false</organismsDiffer>
    <experiments>3</experiments>
</comment>
<comment type="interaction">
    <interactant intactId="EBI-725606">
        <id>Q9NWQ9</id>
    </interactant>
    <interactant intactId="EBI-9675802">
        <id>Q6PF18</id>
        <label>MORN3</label>
    </interactant>
    <organismsDiffer>false</organismsDiffer>
    <experiments>3</experiments>
</comment>
<comment type="interaction">
    <interactant intactId="EBI-725606">
        <id>Q9NWQ9</id>
    </interactant>
    <interactant intactId="EBI-17491620">
        <id>P13349</id>
        <label>MYF5</label>
    </interactant>
    <organismsDiffer>false</organismsDiffer>
    <experiments>3</experiments>
</comment>
<comment type="interaction">
    <interactant intactId="EBI-725606">
        <id>Q9NWQ9</id>
    </interactant>
    <interactant intactId="EBI-740897">
        <id>Q9GZT8</id>
        <label>NIF3L1</label>
    </interactant>
    <organismsDiffer>false</organismsDiffer>
    <experiments>3</experiments>
</comment>
<comment type="interaction">
    <interactant intactId="EBI-725606">
        <id>Q9NWQ9</id>
    </interactant>
    <interactant intactId="EBI-744871">
        <id>O00746</id>
        <label>NME4</label>
    </interactant>
    <organismsDiffer>false</organismsDiffer>
    <experiments>3</experiments>
</comment>
<comment type="interaction">
    <interactant intactId="EBI-725606">
        <id>Q9NWQ9</id>
    </interactant>
    <interactant intactId="EBI-10311735">
        <id>Q9NQ35</id>
        <label>NRIP3</label>
    </interactant>
    <organismsDiffer>false</organismsDiffer>
    <experiments>3</experiments>
</comment>
<comment type="interaction">
    <interactant intactId="EBI-725606">
        <id>Q9NWQ9</id>
    </interactant>
    <interactant intactId="EBI-741048">
        <id>Q7Z3B4</id>
        <label>NUP54</label>
    </interactant>
    <organismsDiffer>false</organismsDiffer>
    <experiments>5</experiments>
</comment>
<comment type="interaction">
    <interactant intactId="EBI-725606">
        <id>Q9NWQ9</id>
    </interactant>
    <interactant intactId="EBI-347978">
        <id>P37198</id>
        <label>NUP62</label>
    </interactant>
    <organismsDiffer>false</organismsDiffer>
    <experiments>5</experiments>
</comment>
<comment type="interaction">
    <interactant intactId="EBI-725606">
        <id>Q9NWQ9</id>
    </interactant>
    <interactant intactId="EBI-10302990">
        <id>Q9BYU1</id>
        <label>PBX4</label>
    </interactant>
    <organismsDiffer>false</organismsDiffer>
    <experiments>3</experiments>
</comment>
<comment type="interaction">
    <interactant intactId="EBI-725606">
        <id>Q9NWQ9</id>
    </interactant>
    <interactant intactId="EBI-7971325">
        <id>Q9C0D0</id>
        <label>PHACTR1</label>
    </interactant>
    <organismsDiffer>false</organismsDiffer>
    <experiments>3</experiments>
</comment>
<comment type="interaction">
    <interactant intactId="EBI-725606">
        <id>Q9NWQ9</id>
    </interactant>
    <interactant intactId="EBI-721782">
        <id>Q96BK5</id>
        <label>PINX1</label>
    </interactant>
    <organismsDiffer>false</organismsDiffer>
    <experiments>3</experiments>
</comment>
<comment type="interaction">
    <interactant intactId="EBI-725606">
        <id>Q9NWQ9</id>
    </interactant>
    <interactant intactId="EBI-743796">
        <id>Q8TBN0</id>
        <label>RAB3IL1</label>
    </interactant>
    <organismsDiffer>false</organismsDiffer>
    <experiments>3</experiments>
</comment>
<comment type="interaction">
    <interactant intactId="EBI-725606">
        <id>Q9NWQ9</id>
    </interactant>
    <interactant intactId="EBI-10829018">
        <id>Q04864-2</id>
        <label>REL</label>
    </interactant>
    <organismsDiffer>false</organismsDiffer>
    <experiments>3</experiments>
</comment>
<comment type="interaction">
    <interactant intactId="EBI-725606">
        <id>Q9NWQ9</id>
    </interactant>
    <interactant intactId="EBI-1111534">
        <id>P61587</id>
        <label>RND3</label>
    </interactant>
    <organismsDiffer>false</organismsDiffer>
    <experiments>3</experiments>
</comment>
<comment type="interaction">
    <interactant intactId="EBI-725606">
        <id>Q9NWQ9</id>
    </interactant>
    <interactant intactId="EBI-2340927">
        <id>P78317</id>
        <label>RNF4</label>
    </interactant>
    <organismsDiffer>false</organismsDiffer>
    <experiments>3</experiments>
</comment>
<comment type="interaction">
    <interactant intactId="EBI-725606">
        <id>Q9NWQ9</id>
    </interactant>
    <interactant intactId="EBI-744831">
        <id>P49247</id>
        <label>RPIA</label>
    </interactant>
    <organismsDiffer>false</organismsDiffer>
    <experiments>3</experiments>
</comment>
<comment type="interaction">
    <interactant intactId="EBI-725606">
        <id>Q9NWQ9</id>
    </interactant>
    <interactant intactId="EBI-750494">
        <id>P49901</id>
        <label>SMCP</label>
    </interactant>
    <organismsDiffer>false</organismsDiffer>
    <experiments>3</experiments>
</comment>
<comment type="interaction">
    <interactant intactId="EBI-725606">
        <id>Q9NWQ9</id>
    </interactant>
    <interactant intactId="EBI-1752557">
        <id>Q9Y5X2</id>
        <label>SNX8</label>
    </interactant>
    <organismsDiffer>false</organismsDiffer>
    <experiments>3</experiments>
</comment>
<comment type="interaction">
    <interactant intactId="EBI-725606">
        <id>Q9NWQ9</id>
    </interactant>
    <interactant intactId="EBI-745513">
        <id>O60224</id>
        <label>SSX4B</label>
    </interactant>
    <organismsDiffer>false</organismsDiffer>
    <experiments>3</experiments>
</comment>
<comment type="interaction">
    <interactant intactId="EBI-725606">
        <id>Q9NWQ9</id>
    </interactant>
    <interactant intactId="EBI-746930">
        <id>Q9H668</id>
        <label>STN1</label>
    </interactant>
    <organismsDiffer>false</organismsDiffer>
    <experiments>4</experiments>
</comment>
<comment type="interaction">
    <interactant intactId="EBI-725606">
        <id>Q9NWQ9</id>
    </interactant>
    <interactant intactId="EBI-7574149">
        <id>Q8IZU3</id>
        <label>SYCP3</label>
    </interactant>
    <organismsDiffer>false</organismsDiffer>
    <experiments>3</experiments>
</comment>
<comment type="interaction">
    <interactant intactId="EBI-725606">
        <id>Q9NWQ9</id>
    </interactant>
    <interactant intactId="EBI-12833746">
        <id>Q5T0J7-2</id>
        <label>TEX35</label>
    </interactant>
    <organismsDiffer>false</organismsDiffer>
    <experiments>3</experiments>
</comment>
<comment type="interaction">
    <interactant intactId="EBI-725606">
        <id>Q9NWQ9</id>
    </interactant>
    <interactant intactId="EBI-11741437">
        <id>Q08117-2</id>
        <label>TLE5</label>
    </interactant>
    <organismsDiffer>false</organismsDiffer>
    <experiments>3</experiments>
</comment>
<comment type="interaction">
    <interactant intactId="EBI-725606">
        <id>Q9NWQ9</id>
    </interactant>
    <interactant intactId="EBI-11524408">
        <id>Q5T124-6</id>
        <label>UBXN11</label>
    </interactant>
    <organismsDiffer>false</organismsDiffer>
    <experiments>3</experiments>
</comment>
<comment type="subcellular location">
    <subcellularLocation>
        <location evidence="1">Mitochondrion</location>
    </subcellularLocation>
</comment>
<organism>
    <name type="scientific">Homo sapiens</name>
    <name type="common">Human</name>
    <dbReference type="NCBI Taxonomy" id="9606"/>
    <lineage>
        <taxon>Eukaryota</taxon>
        <taxon>Metazoa</taxon>
        <taxon>Chordata</taxon>
        <taxon>Craniata</taxon>
        <taxon>Vertebrata</taxon>
        <taxon>Euteleostomi</taxon>
        <taxon>Mammalia</taxon>
        <taxon>Eutheria</taxon>
        <taxon>Euarchontoglires</taxon>
        <taxon>Primates</taxon>
        <taxon>Haplorrhini</taxon>
        <taxon>Catarrhini</taxon>
        <taxon>Hominidae</taxon>
        <taxon>Homo</taxon>
    </lineage>
</organism>
<name>CN119_HUMAN</name>
<dbReference type="EMBL" id="AF061731">
    <property type="protein sequence ID" value="AAG43142.1"/>
    <property type="molecule type" value="mRNA"/>
</dbReference>
<dbReference type="EMBL" id="AK000678">
    <property type="protein sequence ID" value="BAA91320.1"/>
    <property type="molecule type" value="mRNA"/>
</dbReference>
<dbReference type="EMBL" id="CR457248">
    <property type="protein sequence ID" value="CAG33529.1"/>
    <property type="molecule type" value="mRNA"/>
</dbReference>
<dbReference type="EMBL" id="CH471078">
    <property type="protein sequence ID" value="EAW66185.1"/>
    <property type="molecule type" value="Genomic_DNA"/>
</dbReference>
<dbReference type="EMBL" id="BC009645">
    <property type="protein sequence ID" value="AAH09645.1"/>
    <property type="molecule type" value="mRNA"/>
</dbReference>
<dbReference type="EMBL" id="BC056255">
    <property type="protein sequence ID" value="AAH56255.1"/>
    <property type="molecule type" value="mRNA"/>
</dbReference>
<dbReference type="EMBL" id="BC061637">
    <property type="protein sequence ID" value="AAH61637.1"/>
    <property type="molecule type" value="mRNA"/>
</dbReference>
<dbReference type="CCDS" id="CCDS9588.1"/>
<dbReference type="RefSeq" id="NP_060394.1">
    <property type="nucleotide sequence ID" value="NM_017924.4"/>
</dbReference>
<dbReference type="RefSeq" id="XP_016876879.1">
    <property type="nucleotide sequence ID" value="XM_017021390.3"/>
</dbReference>
<dbReference type="RefSeq" id="XP_054232255.1">
    <property type="nucleotide sequence ID" value="XM_054376280.1"/>
</dbReference>
<dbReference type="SMR" id="Q9NWQ9"/>
<dbReference type="BioGRID" id="120349">
    <property type="interactions" value="66"/>
</dbReference>
<dbReference type="FunCoup" id="Q9NWQ9">
    <property type="interactions" value="2182"/>
</dbReference>
<dbReference type="IntAct" id="Q9NWQ9">
    <property type="interactions" value="62"/>
</dbReference>
<dbReference type="STRING" id="9606.ENSP00000322238"/>
<dbReference type="iPTMnet" id="Q9NWQ9"/>
<dbReference type="PhosphoSitePlus" id="Q9NWQ9"/>
<dbReference type="BioMuta" id="C14orf119"/>
<dbReference type="jPOST" id="Q9NWQ9"/>
<dbReference type="MassIVE" id="Q9NWQ9"/>
<dbReference type="PaxDb" id="9606-ENSP00000322238"/>
<dbReference type="PeptideAtlas" id="Q9NWQ9"/>
<dbReference type="ProteomicsDB" id="82962"/>
<dbReference type="Pumba" id="Q9NWQ9"/>
<dbReference type="TopDownProteomics" id="Q9NWQ9"/>
<dbReference type="Antibodypedia" id="177">
    <property type="antibodies" value="22 antibodies from 11 providers"/>
</dbReference>
<dbReference type="DNASU" id="55017"/>
<dbReference type="Ensembl" id="ENST00000319074.6">
    <property type="protein sequence ID" value="ENSP00000322238.4"/>
    <property type="gene ID" value="ENSG00000179933.6"/>
</dbReference>
<dbReference type="Ensembl" id="ENST00000554203.1">
    <property type="protein sequence ID" value="ENSP00000450861.1"/>
    <property type="gene ID" value="ENSG00000179933.6"/>
</dbReference>
<dbReference type="GeneID" id="55017"/>
<dbReference type="KEGG" id="hsa:55017"/>
<dbReference type="MANE-Select" id="ENST00000319074.6">
    <property type="protein sequence ID" value="ENSP00000322238.4"/>
    <property type="RefSeq nucleotide sequence ID" value="NM_017924.4"/>
    <property type="RefSeq protein sequence ID" value="NP_060394.1"/>
</dbReference>
<dbReference type="UCSC" id="uc001wiu.4">
    <property type="organism name" value="human"/>
</dbReference>
<dbReference type="AGR" id="HGNC:20270"/>
<dbReference type="CTD" id="55017"/>
<dbReference type="DisGeNET" id="55017"/>
<dbReference type="GeneCards" id="C14orf119"/>
<dbReference type="HGNC" id="HGNC:20270">
    <property type="gene designation" value="C14orf119"/>
</dbReference>
<dbReference type="HPA" id="ENSG00000179933">
    <property type="expression patterns" value="Low tissue specificity"/>
</dbReference>
<dbReference type="neXtProt" id="NX_Q9NWQ9"/>
<dbReference type="OpenTargets" id="ENSG00000179933"/>
<dbReference type="PharmGKB" id="PA134974692"/>
<dbReference type="VEuPathDB" id="HostDB:ENSG00000179933"/>
<dbReference type="eggNOG" id="ENOG502S13Y">
    <property type="taxonomic scope" value="Eukaryota"/>
</dbReference>
<dbReference type="GeneTree" id="ENSGT00390000007438"/>
<dbReference type="HOGENOM" id="CLU_121983_1_0_1"/>
<dbReference type="InParanoid" id="Q9NWQ9"/>
<dbReference type="OMA" id="WFNYVSQ"/>
<dbReference type="OrthoDB" id="6514241at2759"/>
<dbReference type="PAN-GO" id="Q9NWQ9">
    <property type="GO annotations" value="0 GO annotations based on evolutionary models"/>
</dbReference>
<dbReference type="PhylomeDB" id="Q9NWQ9"/>
<dbReference type="TreeFam" id="TF324452"/>
<dbReference type="PathwayCommons" id="Q9NWQ9"/>
<dbReference type="SignaLink" id="Q9NWQ9"/>
<dbReference type="BioGRID-ORCS" id="55017">
    <property type="hits" value="14 hits in 1130 CRISPR screens"/>
</dbReference>
<dbReference type="ChiTaRS" id="C14orf119">
    <property type="organism name" value="human"/>
</dbReference>
<dbReference type="GenomeRNAi" id="55017"/>
<dbReference type="Pharos" id="Q9NWQ9">
    <property type="development level" value="Tdark"/>
</dbReference>
<dbReference type="PRO" id="PR:Q9NWQ9"/>
<dbReference type="Proteomes" id="UP000005640">
    <property type="component" value="Chromosome 14"/>
</dbReference>
<dbReference type="RNAct" id="Q9NWQ9">
    <property type="molecule type" value="protein"/>
</dbReference>
<dbReference type="Bgee" id="ENSG00000179933">
    <property type="expression patterns" value="Expressed in ileal mucosa and 187 other cell types or tissues"/>
</dbReference>
<dbReference type="GO" id="GO:0005829">
    <property type="term" value="C:cytosol"/>
    <property type="evidence" value="ECO:0000314"/>
    <property type="project" value="HPA"/>
</dbReference>
<dbReference type="GO" id="GO:0005739">
    <property type="term" value="C:mitochondrion"/>
    <property type="evidence" value="ECO:0000314"/>
    <property type="project" value="HPA"/>
</dbReference>
<dbReference type="InterPro" id="IPR028019">
    <property type="entry name" value="DUF4508"/>
</dbReference>
<dbReference type="PANTHER" id="PTHR16260:SF4">
    <property type="match status" value="1"/>
</dbReference>
<dbReference type="PANTHER" id="PTHR16260">
    <property type="entry name" value="SIMILAR TO 1700123O20RIK PROTEIN"/>
    <property type="match status" value="1"/>
</dbReference>
<dbReference type="Pfam" id="PF14969">
    <property type="entry name" value="DUF4508"/>
    <property type="match status" value="1"/>
</dbReference>
<keyword id="KW-0496">Mitochondrion</keyword>
<keyword id="KW-1267">Proteomics identification</keyword>
<keyword id="KW-1185">Reference proteome</keyword>
<evidence type="ECO:0000269" key="1">
    <source>
    </source>
</evidence>
<sequence>MPLESSSSMPLSFPSLLPSVPHNTNPSPPLMSYITSQEMKCILHWFANWSGPQRERFLEDLVAKAVPEKLQPLLDSLEQLSVSGADRPPSIFECQLHLWDQWFRGWAEQERNEFVRQLEFSEPDFVAKFYQAVAATAGKD</sequence>
<accession>Q9NWQ9</accession>
<accession>Q6IAA7</accession>
<feature type="chain" id="PRO_0000089929" description="Uncharacterized protein C14orf119">
    <location>
        <begin position="1"/>
        <end position="140"/>
    </location>
</feature>
<feature type="sequence variant" id="VAR_033744" description="In dbSNP:rs35065609.">
    <original>L</original>
    <variation>V</variation>
    <location>
        <position position="16"/>
    </location>
</feature>
<reference key="1">
    <citation type="submission" date="1998-04" db="EMBL/GenBank/DDBJ databases">
        <authorList>
            <person name="Mao Y.M."/>
            <person name="Xie Y."/>
            <person name="Ying K."/>
        </authorList>
    </citation>
    <scope>NUCLEOTIDE SEQUENCE [LARGE SCALE MRNA]</scope>
    <source>
        <tissue>Fetal brain</tissue>
    </source>
</reference>
<reference key="2">
    <citation type="journal article" date="2004" name="Nat. Genet.">
        <title>Complete sequencing and characterization of 21,243 full-length human cDNAs.</title>
        <authorList>
            <person name="Ota T."/>
            <person name="Suzuki Y."/>
            <person name="Nishikawa T."/>
            <person name="Otsuki T."/>
            <person name="Sugiyama T."/>
            <person name="Irie R."/>
            <person name="Wakamatsu A."/>
            <person name="Hayashi K."/>
            <person name="Sato H."/>
            <person name="Nagai K."/>
            <person name="Kimura K."/>
            <person name="Makita H."/>
            <person name="Sekine M."/>
            <person name="Obayashi M."/>
            <person name="Nishi T."/>
            <person name="Shibahara T."/>
            <person name="Tanaka T."/>
            <person name="Ishii S."/>
            <person name="Yamamoto J."/>
            <person name="Saito K."/>
            <person name="Kawai Y."/>
            <person name="Isono Y."/>
            <person name="Nakamura Y."/>
            <person name="Nagahari K."/>
            <person name="Murakami K."/>
            <person name="Yasuda T."/>
            <person name="Iwayanagi T."/>
            <person name="Wagatsuma M."/>
            <person name="Shiratori A."/>
            <person name="Sudo H."/>
            <person name="Hosoiri T."/>
            <person name="Kaku Y."/>
            <person name="Kodaira H."/>
            <person name="Kondo H."/>
            <person name="Sugawara M."/>
            <person name="Takahashi M."/>
            <person name="Kanda K."/>
            <person name="Yokoi T."/>
            <person name="Furuya T."/>
            <person name="Kikkawa E."/>
            <person name="Omura Y."/>
            <person name="Abe K."/>
            <person name="Kamihara K."/>
            <person name="Katsuta N."/>
            <person name="Sato K."/>
            <person name="Tanikawa M."/>
            <person name="Yamazaki M."/>
            <person name="Ninomiya K."/>
            <person name="Ishibashi T."/>
            <person name="Yamashita H."/>
            <person name="Murakawa K."/>
            <person name="Fujimori K."/>
            <person name="Tanai H."/>
            <person name="Kimata M."/>
            <person name="Watanabe M."/>
            <person name="Hiraoka S."/>
            <person name="Chiba Y."/>
            <person name="Ishida S."/>
            <person name="Ono Y."/>
            <person name="Takiguchi S."/>
            <person name="Watanabe S."/>
            <person name="Yosida M."/>
            <person name="Hotuta T."/>
            <person name="Kusano J."/>
            <person name="Kanehori K."/>
            <person name="Takahashi-Fujii A."/>
            <person name="Hara H."/>
            <person name="Tanase T.-O."/>
            <person name="Nomura Y."/>
            <person name="Togiya S."/>
            <person name="Komai F."/>
            <person name="Hara R."/>
            <person name="Takeuchi K."/>
            <person name="Arita M."/>
            <person name="Imose N."/>
            <person name="Musashino K."/>
            <person name="Yuuki H."/>
            <person name="Oshima A."/>
            <person name="Sasaki N."/>
            <person name="Aotsuka S."/>
            <person name="Yoshikawa Y."/>
            <person name="Matsunawa H."/>
            <person name="Ichihara T."/>
            <person name="Shiohata N."/>
            <person name="Sano S."/>
            <person name="Moriya S."/>
            <person name="Momiyama H."/>
            <person name="Satoh N."/>
            <person name="Takami S."/>
            <person name="Terashima Y."/>
            <person name="Suzuki O."/>
            <person name="Nakagawa S."/>
            <person name="Senoh A."/>
            <person name="Mizoguchi H."/>
            <person name="Goto Y."/>
            <person name="Shimizu F."/>
            <person name="Wakebe H."/>
            <person name="Hishigaki H."/>
            <person name="Watanabe T."/>
            <person name="Sugiyama A."/>
            <person name="Takemoto M."/>
            <person name="Kawakami B."/>
            <person name="Yamazaki M."/>
            <person name="Watanabe K."/>
            <person name="Kumagai A."/>
            <person name="Itakura S."/>
            <person name="Fukuzumi Y."/>
            <person name="Fujimori Y."/>
            <person name="Komiyama M."/>
            <person name="Tashiro H."/>
            <person name="Tanigami A."/>
            <person name="Fujiwara T."/>
            <person name="Ono T."/>
            <person name="Yamada K."/>
            <person name="Fujii Y."/>
            <person name="Ozaki K."/>
            <person name="Hirao M."/>
            <person name="Ohmori Y."/>
            <person name="Kawabata A."/>
            <person name="Hikiji T."/>
            <person name="Kobatake N."/>
            <person name="Inagaki H."/>
            <person name="Ikema Y."/>
            <person name="Okamoto S."/>
            <person name="Okitani R."/>
            <person name="Kawakami T."/>
            <person name="Noguchi S."/>
            <person name="Itoh T."/>
            <person name="Shigeta K."/>
            <person name="Senba T."/>
            <person name="Matsumura K."/>
            <person name="Nakajima Y."/>
            <person name="Mizuno T."/>
            <person name="Morinaga M."/>
            <person name="Sasaki M."/>
            <person name="Togashi T."/>
            <person name="Oyama M."/>
            <person name="Hata H."/>
            <person name="Watanabe M."/>
            <person name="Komatsu T."/>
            <person name="Mizushima-Sugano J."/>
            <person name="Satoh T."/>
            <person name="Shirai Y."/>
            <person name="Takahashi Y."/>
            <person name="Nakagawa K."/>
            <person name="Okumura K."/>
            <person name="Nagase T."/>
            <person name="Nomura N."/>
            <person name="Kikuchi H."/>
            <person name="Masuho Y."/>
            <person name="Yamashita R."/>
            <person name="Nakai K."/>
            <person name="Yada T."/>
            <person name="Nakamura Y."/>
            <person name="Ohara O."/>
            <person name="Isogai T."/>
            <person name="Sugano S."/>
        </authorList>
    </citation>
    <scope>NUCLEOTIDE SEQUENCE [LARGE SCALE MRNA]</scope>
    <source>
        <tissue>Ileal mucosa</tissue>
    </source>
</reference>
<reference key="3">
    <citation type="submission" date="2004-06" db="EMBL/GenBank/DDBJ databases">
        <title>Cloning of human full open reading frames in Gateway(TM) system entry vector (pDONR201).</title>
        <authorList>
            <person name="Ebert L."/>
            <person name="Schick M."/>
            <person name="Neubert P."/>
            <person name="Schatten R."/>
            <person name="Henze S."/>
            <person name="Korn B."/>
        </authorList>
    </citation>
    <scope>NUCLEOTIDE SEQUENCE [LARGE SCALE MRNA]</scope>
</reference>
<reference key="4">
    <citation type="submission" date="2005-09" db="EMBL/GenBank/DDBJ databases">
        <authorList>
            <person name="Mural R.J."/>
            <person name="Istrail S."/>
            <person name="Sutton G.G."/>
            <person name="Florea L."/>
            <person name="Halpern A.L."/>
            <person name="Mobarry C.M."/>
            <person name="Lippert R."/>
            <person name="Walenz B."/>
            <person name="Shatkay H."/>
            <person name="Dew I."/>
            <person name="Miller J.R."/>
            <person name="Flanigan M.J."/>
            <person name="Edwards N.J."/>
            <person name="Bolanos R."/>
            <person name="Fasulo D."/>
            <person name="Halldorsson B.V."/>
            <person name="Hannenhalli S."/>
            <person name="Turner R."/>
            <person name="Yooseph S."/>
            <person name="Lu F."/>
            <person name="Nusskern D.R."/>
            <person name="Shue B.C."/>
            <person name="Zheng X.H."/>
            <person name="Zhong F."/>
            <person name="Delcher A.L."/>
            <person name="Huson D.H."/>
            <person name="Kravitz S.A."/>
            <person name="Mouchard L."/>
            <person name="Reinert K."/>
            <person name="Remington K.A."/>
            <person name="Clark A.G."/>
            <person name="Waterman M.S."/>
            <person name="Eichler E.E."/>
            <person name="Adams M.D."/>
            <person name="Hunkapiller M.W."/>
            <person name="Myers E.W."/>
            <person name="Venter J.C."/>
        </authorList>
    </citation>
    <scope>NUCLEOTIDE SEQUENCE [LARGE SCALE GENOMIC DNA]</scope>
</reference>
<reference key="5">
    <citation type="journal article" date="2004" name="Genome Res.">
        <title>The status, quality, and expansion of the NIH full-length cDNA project: the Mammalian Gene Collection (MGC).</title>
        <authorList>
            <consortium name="The MGC Project Team"/>
        </authorList>
    </citation>
    <scope>NUCLEOTIDE SEQUENCE [LARGE SCALE MRNA]</scope>
    <source>
        <tissue>Cervix</tissue>
        <tissue>Lung</tissue>
        <tissue>Uterus</tissue>
    </source>
</reference>
<reference key="6">
    <citation type="journal article" date="2011" name="BMC Syst. Biol.">
        <title>Initial characterization of the human central proteome.</title>
        <authorList>
            <person name="Burkard T.R."/>
            <person name="Planyavsky M."/>
            <person name="Kaupe I."/>
            <person name="Breitwieser F.P."/>
            <person name="Buerckstuemmer T."/>
            <person name="Bennett K.L."/>
            <person name="Superti-Furga G."/>
            <person name="Colinge J."/>
        </authorList>
    </citation>
    <scope>IDENTIFICATION BY MASS SPECTROMETRY [LARGE SCALE ANALYSIS]</scope>
</reference>
<reference key="7">
    <citation type="journal article" date="2012" name="J. Proteomics">
        <title>Systematic validation of antibody binding and protein subcellular localization using siRNA and confocal microscopy.</title>
        <authorList>
            <person name="Stadler C."/>
            <person name="Hjelmare M."/>
            <person name="Neumann B."/>
            <person name="Jonasson K."/>
            <person name="Pepperkok R."/>
            <person name="Uhlen M."/>
            <person name="Lundberg E."/>
        </authorList>
    </citation>
    <scope>SUBCELLULAR LOCATION</scope>
</reference>
<protein>
    <recommendedName>
        <fullName>Uncharacterized protein C14orf119</fullName>
    </recommendedName>
</protein>